<name>MIC27_HUMAN</name>
<accession>Q6UXV4</accession>
<accession>Q3KNU7</accession>
<accession>Q5H9D1</accession>
<evidence type="ECO:0000255" key="1"/>
<evidence type="ECO:0000256" key="2">
    <source>
        <dbReference type="SAM" id="MobiDB-lite"/>
    </source>
</evidence>
<evidence type="ECO:0000269" key="3">
    <source>
    </source>
</evidence>
<evidence type="ECO:0000269" key="4">
    <source>
    </source>
</evidence>
<evidence type="ECO:0000269" key="5">
    <source>
    </source>
</evidence>
<evidence type="ECO:0000269" key="6">
    <source>
    </source>
</evidence>
<evidence type="ECO:0000305" key="7"/>
<evidence type="ECO:0007744" key="8">
    <source>
    </source>
</evidence>
<comment type="function">
    <text evidence="3 4">Component of the MICOS complex, a large protein complex of the mitochondrial inner membrane that plays crucial roles in the maintenance of crista junctions, inner membrane architecture, and formation of contact sites to the outer membrane. Specifically binds to cardiolipin (in vitro) but not to the precursor lipid phosphatidylglycerol. Plays a crucial role in crista junction formation and mitochondrial function (PubMed:23704930), (PubMed:25764979).</text>
</comment>
<comment type="subunit">
    <text evidence="3 4 5 6">Component of the mitochondrial contact site and cristae organizing system (MICOS) complex, composed of at least MICOS10/MIC10, CHCHD3/MIC19, CHCHD6/MIC25, APOOL/MIC27, IMMT/MIC60, APOO/MIC23/MIC26 and MICOS13/MIC13. This complex was also known under the names MINOS or MitOS complex (PubMed:23704930, PubMed:25764979, PubMed:25781180, PubMed:25997101). The MICOS complex associates with mitochondrial outer membrane proteins SAMM50, MTX1 and MTX2 (together described as components of the mitochondrial outer membrane sorting assembly machinery (SAM) complex) and DNAJC11, mitochondrial inner membrane protein TMEM11 and with HSPA9. The MICOS and SAM complexes together with DNAJC11 are part of a large protein complex spanning both membranes termed the mitochondrial intermembrane space bridging (MIB) complex. Interacts with MICOS10/MIC10, IMMT/MIC60 and APOO/MIC23/MIC26 (PubMed:23704930, PubMed:25764979, PubMed:25781180, PubMed:25997101).</text>
</comment>
<comment type="subcellular location">
    <subcellularLocation>
        <location evidence="3 4">Mitochondrion inner membrane</location>
        <topology evidence="3">Multi-pass membrane protein</topology>
    </subcellularLocation>
    <subcellularLocation>
        <location evidence="5 6">Mitochondrion</location>
    </subcellularLocation>
</comment>
<comment type="similarity">
    <text evidence="7">Belongs to the apolipoprotein O/MICOS complex subunit Mic27 family.</text>
</comment>
<feature type="transit peptide" description="Mitochondrion" evidence="1">
    <location>
        <begin position="1"/>
        <end position="27"/>
    </location>
</feature>
<feature type="chain" id="PRO_0000042052" description="MICOS complex subunit MIC27">
    <location>
        <begin position="28"/>
        <end position="268"/>
    </location>
</feature>
<feature type="topological domain" description="Mitochondrial intermembrane" evidence="1">
    <location>
        <begin position="28"/>
        <end position="110"/>
    </location>
</feature>
<feature type="transmembrane region" description="Helical" evidence="1">
    <location>
        <begin position="111"/>
        <end position="129"/>
    </location>
</feature>
<feature type="topological domain" description="Mitochondrial matrix" evidence="1">
    <location>
        <begin position="130"/>
        <end position="137"/>
    </location>
</feature>
<feature type="transmembrane region" description="Helical" evidence="1">
    <location>
        <begin position="138"/>
        <end position="155"/>
    </location>
</feature>
<feature type="topological domain" description="Mitochondrial intermembrane" evidence="1">
    <location>
        <begin position="156"/>
        <end position="268"/>
    </location>
</feature>
<feature type="region of interest" description="Disordered" evidence="2">
    <location>
        <begin position="187"/>
        <end position="268"/>
    </location>
</feature>
<feature type="compositionally biased region" description="Basic and acidic residues" evidence="2">
    <location>
        <begin position="187"/>
        <end position="200"/>
    </location>
</feature>
<feature type="compositionally biased region" description="Basic and acidic residues" evidence="2">
    <location>
        <begin position="249"/>
        <end position="260"/>
    </location>
</feature>
<feature type="modified residue" description="Phosphoserine" evidence="8">
    <location>
        <position position="204"/>
    </location>
</feature>
<gene>
    <name type="primary">APOOL</name>
    <name type="synonym">CXorf33</name>
    <name type="synonym">FAM121A</name>
    <name type="synonym">MIC27</name>
    <name type="ORF">UNQ8193/PRO23204</name>
</gene>
<proteinExistence type="evidence at protein level"/>
<dbReference type="EMBL" id="AY358193">
    <property type="protein sequence ID" value="AAQ88560.1"/>
    <property type="molecule type" value="mRNA"/>
</dbReference>
<dbReference type="EMBL" id="Z83820">
    <property type="status" value="NOT_ANNOTATED_CDS"/>
    <property type="molecule type" value="Genomic_DNA"/>
</dbReference>
<dbReference type="EMBL" id="Z99571">
    <property type="status" value="NOT_ANNOTATED_CDS"/>
    <property type="molecule type" value="Genomic_DNA"/>
</dbReference>
<dbReference type="EMBL" id="BC107096">
    <property type="protein sequence ID" value="AAI07097.1"/>
    <property type="molecule type" value="mRNA"/>
</dbReference>
<dbReference type="CCDS" id="CCDS48138.1"/>
<dbReference type="RefSeq" id="NP_940852.3">
    <property type="nucleotide sequence ID" value="NM_198450.6"/>
</dbReference>
<dbReference type="BioGRID" id="126558">
    <property type="interactions" value="98"/>
</dbReference>
<dbReference type="ComplexPortal" id="CPX-6141">
    <property type="entry name" value="MICOS mitochondrial contact site and cristae organizing system complex"/>
</dbReference>
<dbReference type="CORUM" id="Q6UXV4"/>
<dbReference type="DIP" id="DIP-47309N"/>
<dbReference type="FunCoup" id="Q6UXV4">
    <property type="interactions" value="880"/>
</dbReference>
<dbReference type="IntAct" id="Q6UXV4">
    <property type="interactions" value="64"/>
</dbReference>
<dbReference type="MINT" id="Q6UXV4"/>
<dbReference type="STRING" id="9606.ENSP00000362268"/>
<dbReference type="GlyGen" id="Q6UXV4">
    <property type="glycosylation" value="1 site, 1 O-linked glycan (1 site)"/>
</dbReference>
<dbReference type="iPTMnet" id="Q6UXV4"/>
<dbReference type="MetOSite" id="Q6UXV4"/>
<dbReference type="PhosphoSitePlus" id="Q6UXV4"/>
<dbReference type="SwissPalm" id="Q6UXV4"/>
<dbReference type="BioMuta" id="APOOL"/>
<dbReference type="DMDM" id="74749432"/>
<dbReference type="jPOST" id="Q6UXV4"/>
<dbReference type="MassIVE" id="Q6UXV4"/>
<dbReference type="PaxDb" id="9606-ENSP00000362268"/>
<dbReference type="PeptideAtlas" id="Q6UXV4"/>
<dbReference type="ProteomicsDB" id="67669"/>
<dbReference type="Pumba" id="Q6UXV4"/>
<dbReference type="TopDownProteomics" id="Q6UXV4"/>
<dbReference type="Antibodypedia" id="390">
    <property type="antibodies" value="139 antibodies from 24 providers"/>
</dbReference>
<dbReference type="DNASU" id="139322"/>
<dbReference type="Ensembl" id="ENST00000373173.7">
    <property type="protein sequence ID" value="ENSP00000362268.2"/>
    <property type="gene ID" value="ENSG00000155008.16"/>
</dbReference>
<dbReference type="GeneID" id="139322"/>
<dbReference type="KEGG" id="hsa:139322"/>
<dbReference type="MANE-Select" id="ENST00000373173.7">
    <property type="protein sequence ID" value="ENSP00000362268.2"/>
    <property type="RefSeq nucleotide sequence ID" value="NM_198450.6"/>
    <property type="RefSeq protein sequence ID" value="NP_940852.3"/>
</dbReference>
<dbReference type="UCSC" id="uc004eem.4">
    <property type="organism name" value="human"/>
</dbReference>
<dbReference type="AGR" id="HGNC:24009"/>
<dbReference type="CTD" id="139322"/>
<dbReference type="GeneCards" id="APOOL"/>
<dbReference type="HGNC" id="HGNC:24009">
    <property type="gene designation" value="APOOL"/>
</dbReference>
<dbReference type="HPA" id="ENSG00000155008">
    <property type="expression patterns" value="Low tissue specificity"/>
</dbReference>
<dbReference type="MIM" id="300955">
    <property type="type" value="gene"/>
</dbReference>
<dbReference type="neXtProt" id="NX_Q6UXV4"/>
<dbReference type="OpenTargets" id="ENSG00000155008"/>
<dbReference type="PharmGKB" id="PA162376732"/>
<dbReference type="VEuPathDB" id="HostDB:ENSG00000155008"/>
<dbReference type="eggNOG" id="KOG4798">
    <property type="taxonomic scope" value="Eukaryota"/>
</dbReference>
<dbReference type="GeneTree" id="ENSGT00530000063666"/>
<dbReference type="HOGENOM" id="CLU_048383_0_0_1"/>
<dbReference type="InParanoid" id="Q6UXV4"/>
<dbReference type="OrthoDB" id="5973346at2759"/>
<dbReference type="PAN-GO" id="Q6UXV4">
    <property type="GO annotations" value="2 GO annotations based on evolutionary models"/>
</dbReference>
<dbReference type="PhylomeDB" id="Q6UXV4"/>
<dbReference type="TreeFam" id="TF315313"/>
<dbReference type="PathwayCommons" id="Q6UXV4"/>
<dbReference type="Reactome" id="R-HSA-114608">
    <property type="pathway name" value="Platelet degranulation"/>
</dbReference>
<dbReference type="Reactome" id="R-HSA-8949613">
    <property type="pathway name" value="Cristae formation"/>
</dbReference>
<dbReference type="SignaLink" id="Q6UXV4"/>
<dbReference type="BioGRID-ORCS" id="139322">
    <property type="hits" value="28 hits in 776 CRISPR screens"/>
</dbReference>
<dbReference type="CD-CODE" id="FB4E32DD">
    <property type="entry name" value="Presynaptic clusters and postsynaptic densities"/>
</dbReference>
<dbReference type="ChiTaRS" id="APOOL">
    <property type="organism name" value="human"/>
</dbReference>
<dbReference type="GenomeRNAi" id="139322"/>
<dbReference type="Pharos" id="Q6UXV4">
    <property type="development level" value="Tbio"/>
</dbReference>
<dbReference type="PRO" id="PR:Q6UXV4"/>
<dbReference type="Proteomes" id="UP000005640">
    <property type="component" value="Chromosome X"/>
</dbReference>
<dbReference type="RNAct" id="Q6UXV4">
    <property type="molecule type" value="protein"/>
</dbReference>
<dbReference type="Bgee" id="ENSG00000155008">
    <property type="expression patterns" value="Expressed in skeletal muscle tissue of biceps brachii and 204 other cell types or tissues"/>
</dbReference>
<dbReference type="ExpressionAtlas" id="Q6UXV4">
    <property type="expression patterns" value="baseline and differential"/>
</dbReference>
<dbReference type="GO" id="GO:0005576">
    <property type="term" value="C:extracellular region"/>
    <property type="evidence" value="ECO:0000304"/>
    <property type="project" value="Reactome"/>
</dbReference>
<dbReference type="GO" id="GO:0140275">
    <property type="term" value="C:MIB complex"/>
    <property type="evidence" value="ECO:0007005"/>
    <property type="project" value="UniProtKB"/>
</dbReference>
<dbReference type="GO" id="GO:0061617">
    <property type="term" value="C:MICOS complex"/>
    <property type="evidence" value="ECO:0000314"/>
    <property type="project" value="UniProtKB"/>
</dbReference>
<dbReference type="GO" id="GO:0044284">
    <property type="term" value="C:mitochondrial crista junction"/>
    <property type="evidence" value="ECO:0000303"/>
    <property type="project" value="ComplexPortal"/>
</dbReference>
<dbReference type="GO" id="GO:0005743">
    <property type="term" value="C:mitochondrial inner membrane"/>
    <property type="evidence" value="ECO:0000303"/>
    <property type="project" value="ComplexPortal"/>
</dbReference>
<dbReference type="GO" id="GO:0005739">
    <property type="term" value="C:mitochondrion"/>
    <property type="evidence" value="ECO:0000314"/>
    <property type="project" value="UniProtKB"/>
</dbReference>
<dbReference type="GO" id="GO:0031093">
    <property type="term" value="C:platelet alpha granule lumen"/>
    <property type="evidence" value="ECO:0000304"/>
    <property type="project" value="Reactome"/>
</dbReference>
<dbReference type="GO" id="GO:0001401">
    <property type="term" value="C:SAM complex"/>
    <property type="evidence" value="ECO:0007005"/>
    <property type="project" value="UniProtKB"/>
</dbReference>
<dbReference type="GO" id="GO:0042407">
    <property type="term" value="P:cristae formation"/>
    <property type="evidence" value="ECO:0000318"/>
    <property type="project" value="GO_Central"/>
</dbReference>
<dbReference type="GO" id="GO:0007007">
    <property type="term" value="P:inner mitochondrial membrane organization"/>
    <property type="evidence" value="ECO:0000305"/>
    <property type="project" value="UniProtKB"/>
</dbReference>
<dbReference type="InterPro" id="IPR019166">
    <property type="entry name" value="MIC26/MIC27"/>
</dbReference>
<dbReference type="InterPro" id="IPR033182">
    <property type="entry name" value="MIC26/MIC27_animal"/>
</dbReference>
<dbReference type="PANTHER" id="PTHR14564">
    <property type="entry name" value="MICOS COMPLEX SUBUNIT MIC26 / MIC27 FAMILY MEMBER"/>
    <property type="match status" value="1"/>
</dbReference>
<dbReference type="Pfam" id="PF09769">
    <property type="entry name" value="ApoO"/>
    <property type="match status" value="1"/>
</dbReference>
<sequence>MAAIRMGKLTTMPAGLIYASVSVHAAKQEESKKQLVKPEQLPIYTAPPLQSKYVEEQPGHLQMGFASIRTATGCYIGWCKGVYVFVKNGIMDTVQFGKDAYVYLKNPPRDFLPKMGVITVSGLAGLVSARKGSKFKKITYPLGLATLGATVCYPVQSVIIAKVTAKKVYATSQQIFGAVKSLWTKSSKEESLPKPKEKTKLGSSSEIEVPAKTTHVLKHSVPLPTELSSEAKTKSESTSGATQFMPDPKLMDHGQSHPEDIDMYSTRS</sequence>
<protein>
    <recommendedName>
        <fullName>MICOS complex subunit MIC27</fullName>
    </recommendedName>
    <alternativeName>
        <fullName>Apolipoprotein O-like</fullName>
    </alternativeName>
    <alternativeName>
        <fullName>Protein FAM121A</fullName>
    </alternativeName>
</protein>
<reference key="1">
    <citation type="journal article" date="2003" name="Genome Res.">
        <title>The secreted protein discovery initiative (SPDI), a large-scale effort to identify novel human secreted and transmembrane proteins: a bioinformatics assessment.</title>
        <authorList>
            <person name="Clark H.F."/>
            <person name="Gurney A.L."/>
            <person name="Abaya E."/>
            <person name="Baker K."/>
            <person name="Baldwin D.T."/>
            <person name="Brush J."/>
            <person name="Chen J."/>
            <person name="Chow B."/>
            <person name="Chui C."/>
            <person name="Crowley C."/>
            <person name="Currell B."/>
            <person name="Deuel B."/>
            <person name="Dowd P."/>
            <person name="Eaton D."/>
            <person name="Foster J.S."/>
            <person name="Grimaldi C."/>
            <person name="Gu Q."/>
            <person name="Hass P.E."/>
            <person name="Heldens S."/>
            <person name="Huang A."/>
            <person name="Kim H.S."/>
            <person name="Klimowski L."/>
            <person name="Jin Y."/>
            <person name="Johnson S."/>
            <person name="Lee J."/>
            <person name="Lewis L."/>
            <person name="Liao D."/>
            <person name="Mark M.R."/>
            <person name="Robbie E."/>
            <person name="Sanchez C."/>
            <person name="Schoenfeld J."/>
            <person name="Seshagiri S."/>
            <person name="Simmons L."/>
            <person name="Singh J."/>
            <person name="Smith V."/>
            <person name="Stinson J."/>
            <person name="Vagts A."/>
            <person name="Vandlen R.L."/>
            <person name="Watanabe C."/>
            <person name="Wieand D."/>
            <person name="Woods K."/>
            <person name="Xie M.-H."/>
            <person name="Yansura D.G."/>
            <person name="Yi S."/>
            <person name="Yu G."/>
            <person name="Yuan J."/>
            <person name="Zhang M."/>
            <person name="Zhang Z."/>
            <person name="Goddard A.D."/>
            <person name="Wood W.I."/>
            <person name="Godowski P.J."/>
            <person name="Gray A.M."/>
        </authorList>
    </citation>
    <scope>NUCLEOTIDE SEQUENCE [LARGE SCALE MRNA]</scope>
</reference>
<reference key="2">
    <citation type="journal article" date="2005" name="Nature">
        <title>The DNA sequence of the human X chromosome.</title>
        <authorList>
            <person name="Ross M.T."/>
            <person name="Grafham D.V."/>
            <person name="Coffey A.J."/>
            <person name="Scherer S."/>
            <person name="McLay K."/>
            <person name="Muzny D."/>
            <person name="Platzer M."/>
            <person name="Howell G.R."/>
            <person name="Burrows C."/>
            <person name="Bird C.P."/>
            <person name="Frankish A."/>
            <person name="Lovell F.L."/>
            <person name="Howe K.L."/>
            <person name="Ashurst J.L."/>
            <person name="Fulton R.S."/>
            <person name="Sudbrak R."/>
            <person name="Wen G."/>
            <person name="Jones M.C."/>
            <person name="Hurles M.E."/>
            <person name="Andrews T.D."/>
            <person name="Scott C.E."/>
            <person name="Searle S."/>
            <person name="Ramser J."/>
            <person name="Whittaker A."/>
            <person name="Deadman R."/>
            <person name="Carter N.P."/>
            <person name="Hunt S.E."/>
            <person name="Chen R."/>
            <person name="Cree A."/>
            <person name="Gunaratne P."/>
            <person name="Havlak P."/>
            <person name="Hodgson A."/>
            <person name="Metzker M.L."/>
            <person name="Richards S."/>
            <person name="Scott G."/>
            <person name="Steffen D."/>
            <person name="Sodergren E."/>
            <person name="Wheeler D.A."/>
            <person name="Worley K.C."/>
            <person name="Ainscough R."/>
            <person name="Ambrose K.D."/>
            <person name="Ansari-Lari M.A."/>
            <person name="Aradhya S."/>
            <person name="Ashwell R.I."/>
            <person name="Babbage A.K."/>
            <person name="Bagguley C.L."/>
            <person name="Ballabio A."/>
            <person name="Banerjee R."/>
            <person name="Barker G.E."/>
            <person name="Barlow K.F."/>
            <person name="Barrett I.P."/>
            <person name="Bates K.N."/>
            <person name="Beare D.M."/>
            <person name="Beasley H."/>
            <person name="Beasley O."/>
            <person name="Beck A."/>
            <person name="Bethel G."/>
            <person name="Blechschmidt K."/>
            <person name="Brady N."/>
            <person name="Bray-Allen S."/>
            <person name="Bridgeman A.M."/>
            <person name="Brown A.J."/>
            <person name="Brown M.J."/>
            <person name="Bonnin D."/>
            <person name="Bruford E.A."/>
            <person name="Buhay C."/>
            <person name="Burch P."/>
            <person name="Burford D."/>
            <person name="Burgess J."/>
            <person name="Burrill W."/>
            <person name="Burton J."/>
            <person name="Bye J.M."/>
            <person name="Carder C."/>
            <person name="Carrel L."/>
            <person name="Chako J."/>
            <person name="Chapman J.C."/>
            <person name="Chavez D."/>
            <person name="Chen E."/>
            <person name="Chen G."/>
            <person name="Chen Y."/>
            <person name="Chen Z."/>
            <person name="Chinault C."/>
            <person name="Ciccodicola A."/>
            <person name="Clark S.Y."/>
            <person name="Clarke G."/>
            <person name="Clee C.M."/>
            <person name="Clegg S."/>
            <person name="Clerc-Blankenburg K."/>
            <person name="Clifford K."/>
            <person name="Cobley V."/>
            <person name="Cole C.G."/>
            <person name="Conquer J.S."/>
            <person name="Corby N."/>
            <person name="Connor R.E."/>
            <person name="David R."/>
            <person name="Davies J."/>
            <person name="Davis C."/>
            <person name="Davis J."/>
            <person name="Delgado O."/>
            <person name="Deshazo D."/>
            <person name="Dhami P."/>
            <person name="Ding Y."/>
            <person name="Dinh H."/>
            <person name="Dodsworth S."/>
            <person name="Draper H."/>
            <person name="Dugan-Rocha S."/>
            <person name="Dunham A."/>
            <person name="Dunn M."/>
            <person name="Durbin K.J."/>
            <person name="Dutta I."/>
            <person name="Eades T."/>
            <person name="Ellwood M."/>
            <person name="Emery-Cohen A."/>
            <person name="Errington H."/>
            <person name="Evans K.L."/>
            <person name="Faulkner L."/>
            <person name="Francis F."/>
            <person name="Frankland J."/>
            <person name="Fraser A.E."/>
            <person name="Galgoczy P."/>
            <person name="Gilbert J."/>
            <person name="Gill R."/>
            <person name="Gloeckner G."/>
            <person name="Gregory S.G."/>
            <person name="Gribble S."/>
            <person name="Griffiths C."/>
            <person name="Grocock R."/>
            <person name="Gu Y."/>
            <person name="Gwilliam R."/>
            <person name="Hamilton C."/>
            <person name="Hart E.A."/>
            <person name="Hawes A."/>
            <person name="Heath P.D."/>
            <person name="Heitmann K."/>
            <person name="Hennig S."/>
            <person name="Hernandez J."/>
            <person name="Hinzmann B."/>
            <person name="Ho S."/>
            <person name="Hoffs M."/>
            <person name="Howden P.J."/>
            <person name="Huckle E.J."/>
            <person name="Hume J."/>
            <person name="Hunt P.J."/>
            <person name="Hunt A.R."/>
            <person name="Isherwood J."/>
            <person name="Jacob L."/>
            <person name="Johnson D."/>
            <person name="Jones S."/>
            <person name="de Jong P.J."/>
            <person name="Joseph S.S."/>
            <person name="Keenan S."/>
            <person name="Kelly S."/>
            <person name="Kershaw J.K."/>
            <person name="Khan Z."/>
            <person name="Kioschis P."/>
            <person name="Klages S."/>
            <person name="Knights A.J."/>
            <person name="Kosiura A."/>
            <person name="Kovar-Smith C."/>
            <person name="Laird G.K."/>
            <person name="Langford C."/>
            <person name="Lawlor S."/>
            <person name="Leversha M."/>
            <person name="Lewis L."/>
            <person name="Liu W."/>
            <person name="Lloyd C."/>
            <person name="Lloyd D.M."/>
            <person name="Loulseged H."/>
            <person name="Loveland J.E."/>
            <person name="Lovell J.D."/>
            <person name="Lozado R."/>
            <person name="Lu J."/>
            <person name="Lyne R."/>
            <person name="Ma J."/>
            <person name="Maheshwari M."/>
            <person name="Matthews L.H."/>
            <person name="McDowall J."/>
            <person name="McLaren S."/>
            <person name="McMurray A."/>
            <person name="Meidl P."/>
            <person name="Meitinger T."/>
            <person name="Milne S."/>
            <person name="Miner G."/>
            <person name="Mistry S.L."/>
            <person name="Morgan M."/>
            <person name="Morris S."/>
            <person name="Mueller I."/>
            <person name="Mullikin J.C."/>
            <person name="Nguyen N."/>
            <person name="Nordsiek G."/>
            <person name="Nyakatura G."/>
            <person name="O'dell C.N."/>
            <person name="Okwuonu G."/>
            <person name="Palmer S."/>
            <person name="Pandian R."/>
            <person name="Parker D."/>
            <person name="Parrish J."/>
            <person name="Pasternak S."/>
            <person name="Patel D."/>
            <person name="Pearce A.V."/>
            <person name="Pearson D.M."/>
            <person name="Pelan S.E."/>
            <person name="Perez L."/>
            <person name="Porter K.M."/>
            <person name="Ramsey Y."/>
            <person name="Reichwald K."/>
            <person name="Rhodes S."/>
            <person name="Ridler K.A."/>
            <person name="Schlessinger D."/>
            <person name="Schueler M.G."/>
            <person name="Sehra H.K."/>
            <person name="Shaw-Smith C."/>
            <person name="Shen H."/>
            <person name="Sheridan E.M."/>
            <person name="Shownkeen R."/>
            <person name="Skuce C.D."/>
            <person name="Smith M.L."/>
            <person name="Sotheran E.C."/>
            <person name="Steingruber H.E."/>
            <person name="Steward C.A."/>
            <person name="Storey R."/>
            <person name="Swann R.M."/>
            <person name="Swarbreck D."/>
            <person name="Tabor P.E."/>
            <person name="Taudien S."/>
            <person name="Taylor T."/>
            <person name="Teague B."/>
            <person name="Thomas K."/>
            <person name="Thorpe A."/>
            <person name="Timms K."/>
            <person name="Tracey A."/>
            <person name="Trevanion S."/>
            <person name="Tromans A.C."/>
            <person name="d'Urso M."/>
            <person name="Verduzco D."/>
            <person name="Villasana D."/>
            <person name="Waldron L."/>
            <person name="Wall M."/>
            <person name="Wang Q."/>
            <person name="Warren J."/>
            <person name="Warry G.L."/>
            <person name="Wei X."/>
            <person name="West A."/>
            <person name="Whitehead S.L."/>
            <person name="Whiteley M.N."/>
            <person name="Wilkinson J.E."/>
            <person name="Willey D.L."/>
            <person name="Williams G."/>
            <person name="Williams L."/>
            <person name="Williamson A."/>
            <person name="Williamson H."/>
            <person name="Wilming L."/>
            <person name="Woodmansey R.L."/>
            <person name="Wray P.W."/>
            <person name="Yen J."/>
            <person name="Zhang J."/>
            <person name="Zhou J."/>
            <person name="Zoghbi H."/>
            <person name="Zorilla S."/>
            <person name="Buck D."/>
            <person name="Reinhardt R."/>
            <person name="Poustka A."/>
            <person name="Rosenthal A."/>
            <person name="Lehrach H."/>
            <person name="Meindl A."/>
            <person name="Minx P.J."/>
            <person name="Hillier L.W."/>
            <person name="Willard H.F."/>
            <person name="Wilson R.K."/>
            <person name="Waterston R.H."/>
            <person name="Rice C.M."/>
            <person name="Vaudin M."/>
            <person name="Coulson A."/>
            <person name="Nelson D.L."/>
            <person name="Weinstock G."/>
            <person name="Sulston J.E."/>
            <person name="Durbin R.M."/>
            <person name="Hubbard T."/>
            <person name="Gibbs R.A."/>
            <person name="Beck S."/>
            <person name="Rogers J."/>
            <person name="Bentley D.R."/>
        </authorList>
    </citation>
    <scope>NUCLEOTIDE SEQUENCE [LARGE SCALE GENOMIC DNA]</scope>
</reference>
<reference key="3">
    <citation type="journal article" date="2004" name="Genome Res.">
        <title>The status, quality, and expansion of the NIH full-length cDNA project: the Mammalian Gene Collection (MGC).</title>
        <authorList>
            <consortium name="The MGC Project Team"/>
        </authorList>
    </citation>
    <scope>NUCLEOTIDE SEQUENCE [LARGE SCALE MRNA]</scope>
</reference>
<reference key="4">
    <citation type="journal article" date="2011" name="BMC Syst. Biol.">
        <title>Initial characterization of the human central proteome.</title>
        <authorList>
            <person name="Burkard T.R."/>
            <person name="Planyavsky M."/>
            <person name="Kaupe I."/>
            <person name="Breitwieser F.P."/>
            <person name="Buerckstuemmer T."/>
            <person name="Bennett K.L."/>
            <person name="Superti-Furga G."/>
            <person name="Colinge J."/>
        </authorList>
    </citation>
    <scope>IDENTIFICATION BY MASS SPECTROMETRY [LARGE SCALE ANALYSIS]</scope>
</reference>
<reference key="5">
    <citation type="journal article" date="2013" name="PLoS ONE">
        <title>APOOL is a cardiolipin-binding constituent of the Mitofilin/MINOS protein complex determining cristae morphology in mammalian mitochondria.</title>
        <authorList>
            <person name="Weber T.A."/>
            <person name="Koob S."/>
            <person name="Heide H."/>
            <person name="Wittig I."/>
            <person name="Head B."/>
            <person name="van der Bliek A."/>
            <person name="Brandt U."/>
            <person name="Mittelbronn M."/>
            <person name="Reichert A.S."/>
        </authorList>
    </citation>
    <scope>FUNCTION</scope>
    <scope>SUBCELLULAR LOCATION</scope>
    <scope>TOPOLOGY</scope>
    <scope>IDENTIFICATION IN THE MICOS COMPLEX</scope>
</reference>
<reference key="6">
    <citation type="journal article" date="2014" name="J. Cell Biol.">
        <title>Uniform nomenclature for the mitochondrial contact site and cristae organizing system.</title>
        <authorList>
            <person name="Pfanner N."/>
            <person name="van der Laan M."/>
            <person name="Amati P."/>
            <person name="Capaldi R.A."/>
            <person name="Caudy A.A."/>
            <person name="Chacinska A."/>
            <person name="Darshi M."/>
            <person name="Deckers M."/>
            <person name="Hoppins S."/>
            <person name="Icho T."/>
            <person name="Jakobs S."/>
            <person name="Ji J."/>
            <person name="Kozjak-Pavlovic V."/>
            <person name="Meisinger C."/>
            <person name="Odgren P.R."/>
            <person name="Park S.K."/>
            <person name="Rehling P."/>
            <person name="Reichert A.S."/>
            <person name="Sheikh M.S."/>
            <person name="Taylor S.S."/>
            <person name="Tsuchida N."/>
            <person name="van der Bliek A.M."/>
            <person name="van der Klei I.J."/>
            <person name="Weissman J.S."/>
            <person name="Westermann B."/>
            <person name="Zha J."/>
            <person name="Neupert W."/>
            <person name="Nunnari J."/>
        </authorList>
    </citation>
    <scope>NOMENCLATURE</scope>
</reference>
<reference key="7">
    <citation type="journal article" date="2014" name="J. Proteomics">
        <title>An enzyme assisted RP-RPLC approach for in-depth analysis of human liver phosphoproteome.</title>
        <authorList>
            <person name="Bian Y."/>
            <person name="Song C."/>
            <person name="Cheng K."/>
            <person name="Dong M."/>
            <person name="Wang F."/>
            <person name="Huang J."/>
            <person name="Sun D."/>
            <person name="Wang L."/>
            <person name="Ye M."/>
            <person name="Zou H."/>
        </authorList>
    </citation>
    <scope>PHOSPHORYLATION [LARGE SCALE ANALYSIS] AT SER-204</scope>
    <scope>IDENTIFICATION BY MASS SPECTROMETRY [LARGE SCALE ANALYSIS]</scope>
    <source>
        <tissue>Liver</tissue>
    </source>
</reference>
<reference key="8">
    <citation type="journal article" date="2015" name="Biochim. Biophys. Acta">
        <title>The non-glycosylated isoform of MIC26 is a constituent of the mammalian MICOS complex and promotes formation of crista junctions.</title>
        <authorList>
            <person name="Koob S."/>
            <person name="Barrera M."/>
            <person name="Anand R."/>
            <person name="Reichert A.S."/>
        </authorList>
    </citation>
    <scope>FUNCTION</scope>
    <scope>SUBCELLULAR LOCATION</scope>
    <scope>INTERACTION WITH MICOS10; APOO AND IMMT</scope>
</reference>
<reference key="9">
    <citation type="journal article" date="2015" name="Elife">
        <title>QIL1 is a novel mitochondrial protein required for MICOS complex stability and cristae morphology.</title>
        <authorList>
            <person name="Guarani V."/>
            <person name="McNeill E.M."/>
            <person name="Paulo J.A."/>
            <person name="Huttlin E.L."/>
            <person name="Froehlich F."/>
            <person name="Gygi S.P."/>
            <person name="Van Vactor D."/>
            <person name="Harper J.W."/>
        </authorList>
    </citation>
    <scope>IDENTIFICATION IN THE MICOS COMPLEX</scope>
    <scope>SUBCELLULAR LOCATION</scope>
</reference>
<reference key="10">
    <citation type="journal article" date="2015" name="PLoS ONE">
        <title>Detailed analysis of the human mitochondrial contact site complex indicate a hierarchy of subunits.</title>
        <authorList>
            <person name="Ott C."/>
            <person name="Dorsch E."/>
            <person name="Fraunholz M."/>
            <person name="Straub S."/>
            <person name="Kozjak-Pavlovic V."/>
        </authorList>
    </citation>
    <scope>IDENTIFICATION IN THE MICOS COMPLEX</scope>
    <scope>SUBCELLULAR LOCATION</scope>
</reference>
<reference key="11">
    <citation type="journal article" date="2015" name="Proteomics">
        <title>N-terminome analysis of the human mitochondrial proteome.</title>
        <authorList>
            <person name="Vaca Jacome A.S."/>
            <person name="Rabilloud T."/>
            <person name="Schaeffer-Reiss C."/>
            <person name="Rompais M."/>
            <person name="Ayoub D."/>
            <person name="Lane L."/>
            <person name="Bairoch A."/>
            <person name="Van Dorsselaer A."/>
            <person name="Carapito C."/>
        </authorList>
    </citation>
    <scope>IDENTIFICATION BY MASS SPECTROMETRY [LARGE SCALE ANALYSIS]</scope>
</reference>
<organism>
    <name type="scientific">Homo sapiens</name>
    <name type="common">Human</name>
    <dbReference type="NCBI Taxonomy" id="9606"/>
    <lineage>
        <taxon>Eukaryota</taxon>
        <taxon>Metazoa</taxon>
        <taxon>Chordata</taxon>
        <taxon>Craniata</taxon>
        <taxon>Vertebrata</taxon>
        <taxon>Euteleostomi</taxon>
        <taxon>Mammalia</taxon>
        <taxon>Eutheria</taxon>
        <taxon>Euarchontoglires</taxon>
        <taxon>Primates</taxon>
        <taxon>Haplorrhini</taxon>
        <taxon>Catarrhini</taxon>
        <taxon>Hominidae</taxon>
        <taxon>Homo</taxon>
    </lineage>
</organism>
<keyword id="KW-0472">Membrane</keyword>
<keyword id="KW-0496">Mitochondrion</keyword>
<keyword id="KW-0999">Mitochondrion inner membrane</keyword>
<keyword id="KW-0597">Phosphoprotein</keyword>
<keyword id="KW-1267">Proteomics identification</keyword>
<keyword id="KW-1185">Reference proteome</keyword>
<keyword id="KW-0809">Transit peptide</keyword>
<keyword id="KW-0812">Transmembrane</keyword>
<keyword id="KW-1133">Transmembrane helix</keyword>